<proteinExistence type="inferred from homology"/>
<dbReference type="EC" id="1.3.1.100" evidence="2"/>
<dbReference type="EMBL" id="HG792016">
    <property type="protein sequence ID" value="CDM30151.1"/>
    <property type="molecule type" value="Genomic_DNA"/>
</dbReference>
<dbReference type="SMR" id="W6Q2D7"/>
<dbReference type="STRING" id="1365484.W6Q2D7"/>
<dbReference type="OMA" id="CCAGRTA"/>
<dbReference type="OrthoDB" id="276546at2759"/>
<dbReference type="UniPathway" id="UPA00327"/>
<dbReference type="Proteomes" id="UP000030686">
    <property type="component" value="Unassembled WGS sequence"/>
</dbReference>
<dbReference type="GO" id="GO:0010181">
    <property type="term" value="F:FMN binding"/>
    <property type="evidence" value="ECO:0007669"/>
    <property type="project" value="InterPro"/>
</dbReference>
<dbReference type="GO" id="GO:0003959">
    <property type="term" value="F:NADPH dehydrogenase activity"/>
    <property type="evidence" value="ECO:0007669"/>
    <property type="project" value="TreeGrafter"/>
</dbReference>
<dbReference type="GO" id="GO:0035835">
    <property type="term" value="P:indole alkaloid biosynthetic process"/>
    <property type="evidence" value="ECO:0007669"/>
    <property type="project" value="UniProtKB-UniPathway"/>
</dbReference>
<dbReference type="CDD" id="cd02933">
    <property type="entry name" value="OYE_like_FMN"/>
    <property type="match status" value="1"/>
</dbReference>
<dbReference type="FunFam" id="3.20.20.70:FF:000138">
    <property type="entry name" value="NADPH dehydrogenase 1"/>
    <property type="match status" value="1"/>
</dbReference>
<dbReference type="Gene3D" id="3.20.20.70">
    <property type="entry name" value="Aldolase class I"/>
    <property type="match status" value="1"/>
</dbReference>
<dbReference type="InterPro" id="IPR013785">
    <property type="entry name" value="Aldolase_TIM"/>
</dbReference>
<dbReference type="InterPro" id="IPR001155">
    <property type="entry name" value="OxRdtase_FMN_N"/>
</dbReference>
<dbReference type="InterPro" id="IPR045247">
    <property type="entry name" value="Oye-like"/>
</dbReference>
<dbReference type="PANTHER" id="PTHR22893">
    <property type="entry name" value="NADH OXIDOREDUCTASE-RELATED"/>
    <property type="match status" value="1"/>
</dbReference>
<dbReference type="PANTHER" id="PTHR22893:SF91">
    <property type="entry name" value="NADPH DEHYDROGENASE 2-RELATED"/>
    <property type="match status" value="1"/>
</dbReference>
<dbReference type="Pfam" id="PF00724">
    <property type="entry name" value="Oxidored_FMN"/>
    <property type="match status" value="1"/>
</dbReference>
<dbReference type="SUPFAM" id="SSF51395">
    <property type="entry name" value="FMN-linked oxidoreductases"/>
    <property type="match status" value="1"/>
</dbReference>
<protein>
    <recommendedName>
        <fullName evidence="6">Chanoclavine-I aldehyde reductase ifgG</fullName>
        <ecNumber evidence="2">1.3.1.100</ecNumber>
    </recommendedName>
    <alternativeName>
        <fullName evidence="6">Isofumigaclavine biosynthesis cluster B protein G</fullName>
    </alternativeName>
    <alternativeName>
        <fullName evidence="6">Old yellow enzyme homolog ifgG</fullName>
        <shortName evidence="6">OYE ifgG</shortName>
    </alternativeName>
</protein>
<comment type="function">
    <text evidence="4 5">Chanoclavine-I aldehyde reductase; part of the gene cluster that mediates the biosynthesis of isofumigaclavines, fungal ergot alkaloids (PubMed:28620689). The tryptophan dimethylallyltransferase ifgA catalyzes the first step of ergot alkaloid biosynthesis by condensing dimethylallyl diphosphate (DMAP) and tryptophan to form 4-dimethylallyl-L-tryptophan (PubMed:28620689). The second step is catalyzed by the methyltransferase ifgB that methylates 4-dimethylallyl-L-tryptophan in the presence of S-adenosyl-L-methionine, resulting in the formation of N-methyl-dimethylallyl-L-tryptophan (PubMed:28620689). The catalase ifgD and the FAD-dependent oxidoreductase ifgC then transform N-methyl-dimethylallyl-L-tryptophan to chanoclavine-I which is further oxidized by ifgE in the presence of NAD(+), resulting in the formation of chanoclavine-I aldehyde (PubMed:28902217). The chanoclavine-I aldehyde reductases ifgG and/or fgaOx3 reduce chanoclavine-I aldehyde to dihydrochanoclavine-I aldehyde that spontaneously dehydrates to form 6,8-dimethyl-6,7-didehydroergoline (PubMed:28620689, PubMed:28902217). The festuclavine dehydrogenases ifgF1 and/or ifgF2 then catalyze the reduction of 6,8-dimethyl-6,7-didehydroergoline to form festuclavine (PubMed:28620689). Hydrolysis of festuclavine by a yet undetermined cytochrome P450 monooxygenase (called ifgH) then leads to the formation of isofumigaclavine B which is in turn acetylated by ifgI to isofumigaclavine A (PubMed:28620689). Penicillium roqueforti has interestingly at least two sets of genes for the consumption of chanoclavine-I aldehyde on three different loci, the OYEs ifgG/fgaOx3 and the festuclavine synthase homologs ifgF1/ifgF2 (PubMed:28620689, PubMed:28902217). The reason for the duplication of these genes is unclear, probably to ensure the conversion of chanoclavine-I aldehyde by differential gene expression under various environmental conditions (PubMed:28902217).</text>
</comment>
<comment type="catalytic activity">
    <reaction evidence="2">
        <text>dihydrochanoclavine-I aldehyde + NADP(+) = chanoclavine-I aldehyde + NADPH + H(+)</text>
        <dbReference type="Rhea" id="RHEA:35947"/>
        <dbReference type="ChEBI" id="CHEBI:15378"/>
        <dbReference type="ChEBI" id="CHEBI:57783"/>
        <dbReference type="ChEBI" id="CHEBI:58349"/>
        <dbReference type="ChEBI" id="CHEBI:65032"/>
        <dbReference type="ChEBI" id="CHEBI:71487"/>
        <dbReference type="EC" id="1.3.1.100"/>
    </reaction>
</comment>
<comment type="cofactor">
    <cofactor evidence="2">
        <name>FMN</name>
        <dbReference type="ChEBI" id="CHEBI:58210"/>
    </cofactor>
</comment>
<comment type="pathway">
    <text evidence="8">Alkaloid biosynthesis; ergot alkaloid biosynthesis.</text>
</comment>
<comment type="similarity">
    <text evidence="7">Belongs to the NADH:flavin oxidoreductase/NADH oxidase family.</text>
</comment>
<name>IFGG_PENRF</name>
<accession>W6Q2D7</accession>
<sequence>MTIIPKHPSPTLFKPLALGKCQLQHRIVMSPTTRYRADEAAVPLPFVKEYYAQRASDPGALLITEATNICPNSVGEAHIPGIWSKTQCEAWREVVSQVHAKECYIFCQIYATGRSADPELLASRGFEQVSSSAVAAEPGCQPPRALDEEEIQKYISDYAQAARNAIEVGFDGVEIHGANGYLIDQFTQASCNQRTDEWGGDIPNRARFALQVTMAVINAIGPDRVGMKLSPWSQYSGMGIMGDLVPQFEYLILQLRQLGIAYLHLANSRWLDQMTTHPDPNHLTFVKVWGRSLPVILAGGYDATSAPEVIEMVYADYDNVAIGFGRYFTSTPDLPFRMKNGIALQKYDRSSFYTCLTKTGYLDYPYSPEYLCRSS</sequence>
<gene>
    <name evidence="6" type="primary">ifgGI</name>
    <name type="ORF">PROQFM164_S02g000300</name>
</gene>
<organism>
    <name type="scientific">Penicillium roqueforti (strain FM164)</name>
    <dbReference type="NCBI Taxonomy" id="1365484"/>
    <lineage>
        <taxon>Eukaryota</taxon>
        <taxon>Fungi</taxon>
        <taxon>Dikarya</taxon>
        <taxon>Ascomycota</taxon>
        <taxon>Pezizomycotina</taxon>
        <taxon>Eurotiomycetes</taxon>
        <taxon>Eurotiomycetidae</taxon>
        <taxon>Eurotiales</taxon>
        <taxon>Aspergillaceae</taxon>
        <taxon>Penicillium</taxon>
    </lineage>
</organism>
<reference key="1">
    <citation type="journal article" date="2014" name="Nat. Commun.">
        <title>Multiple recent horizontal transfers of a large genomic region in cheese making fungi.</title>
        <authorList>
            <person name="Cheeseman K."/>
            <person name="Ropars J."/>
            <person name="Renault P."/>
            <person name="Dupont J."/>
            <person name="Gouzy J."/>
            <person name="Branca A."/>
            <person name="Abraham A.-L."/>
            <person name="Ceppi M."/>
            <person name="Conseiller E."/>
            <person name="Debuchy R."/>
            <person name="Malagnac F."/>
            <person name="Goarin A."/>
            <person name="Silar P."/>
            <person name="Lacoste S."/>
            <person name="Sallet E."/>
            <person name="Bensimon A."/>
            <person name="Giraud T."/>
            <person name="Brygoo Y."/>
        </authorList>
    </citation>
    <scope>NUCLEOTIDE SEQUENCE [LARGE SCALE GENOMIC DNA]</scope>
    <source>
        <strain>FM164</strain>
    </source>
</reference>
<reference key="2">
    <citation type="journal article" date="2017" name="Appl. Microbiol. Biotechnol.">
        <title>Silencing of a second dimethylallyltryptophan synthase of Penicillium roqueforti reveals a novel clavine alkaloid gene cluster.</title>
        <authorList>
            <person name="Fernandez-Bodega A."/>
            <person name="Alvarez-Alvarez R."/>
            <person name="Liras P."/>
            <person name="Martin J.F."/>
        </authorList>
    </citation>
    <scope>FUNCTION</scope>
    <scope>PATHWAY</scope>
</reference>
<reference key="3">
    <citation type="journal article" date="2017" name="Org. Biomol. Chem.">
        <title>A bifunctional old yellow enzyme from Penicillium roqueforti is involved in ergot alkaloid biosynthesis.</title>
        <authorList>
            <person name="Gerhards N."/>
            <person name="Li S.M."/>
        </authorList>
    </citation>
    <scope>FUNCTION</scope>
</reference>
<keyword id="KW-0017">Alkaloid metabolism</keyword>
<keyword id="KW-0285">Flavoprotein</keyword>
<keyword id="KW-0288">FMN</keyword>
<keyword id="KW-0521">NADP</keyword>
<keyword id="KW-0560">Oxidoreductase</keyword>
<keyword id="KW-1185">Reference proteome</keyword>
<feature type="chain" id="PRO_0000444541" description="Chanoclavine-I aldehyde reductase ifgG">
    <location>
        <begin position="1"/>
        <end position="375"/>
    </location>
</feature>
<feature type="active site" description="Proton donor" evidence="3">
    <location>
        <position position="181"/>
    </location>
</feature>
<feature type="binding site" evidence="2">
    <location>
        <begin position="31"/>
        <end position="33"/>
    </location>
    <ligand>
        <name>FMN</name>
        <dbReference type="ChEBI" id="CHEBI:58210"/>
    </ligand>
</feature>
<feature type="binding site" evidence="2">
    <location>
        <position position="66"/>
    </location>
    <ligand>
        <name>FMN</name>
        <dbReference type="ChEBI" id="CHEBI:58210"/>
    </ligand>
</feature>
<feature type="binding site" evidence="2">
    <location>
        <position position="108"/>
    </location>
    <ligand>
        <name>FMN</name>
        <dbReference type="ChEBI" id="CHEBI:58210"/>
    </ligand>
</feature>
<feature type="binding site" evidence="2">
    <location>
        <position position="176"/>
    </location>
    <ligand>
        <name>FMN</name>
        <dbReference type="ChEBI" id="CHEBI:58210"/>
    </ligand>
</feature>
<feature type="binding site" evidence="1">
    <location>
        <position position="176"/>
    </location>
    <ligand>
        <name>substrate</name>
    </ligand>
</feature>
<feature type="binding site" evidence="1">
    <location>
        <position position="179"/>
    </location>
    <ligand>
        <name>substrate</name>
    </ligand>
</feature>
<feature type="binding site" evidence="2">
    <location>
        <position position="228"/>
    </location>
    <ligand>
        <name>FMN</name>
        <dbReference type="ChEBI" id="CHEBI:58210"/>
    </ligand>
</feature>
<feature type="binding site" evidence="2">
    <location>
        <position position="300"/>
    </location>
    <ligand>
        <name>FMN</name>
        <dbReference type="ChEBI" id="CHEBI:58210"/>
    </ligand>
</feature>
<feature type="binding site" evidence="2">
    <location>
        <begin position="325"/>
        <end position="326"/>
    </location>
    <ligand>
        <name>FMN</name>
        <dbReference type="ChEBI" id="CHEBI:58210"/>
    </ligand>
</feature>
<feature type="binding site" evidence="1">
    <location>
        <position position="326"/>
    </location>
    <ligand>
        <name>FMN</name>
        <dbReference type="ChEBI" id="CHEBI:58210"/>
    </ligand>
</feature>
<feature type="binding site" evidence="1">
    <location>
        <position position="353"/>
    </location>
    <ligand>
        <name>substrate</name>
    </ligand>
</feature>
<evidence type="ECO:0000250" key="1">
    <source>
        <dbReference type="UniProtKB" id="Q02899"/>
    </source>
</evidence>
<evidence type="ECO:0000250" key="2">
    <source>
        <dbReference type="UniProtKB" id="Q4WZ70"/>
    </source>
</evidence>
<evidence type="ECO:0000250" key="3">
    <source>
        <dbReference type="UniProtKB" id="W6Q9S9"/>
    </source>
</evidence>
<evidence type="ECO:0000269" key="4">
    <source>
    </source>
</evidence>
<evidence type="ECO:0000269" key="5">
    <source>
    </source>
</evidence>
<evidence type="ECO:0000303" key="6">
    <source>
    </source>
</evidence>
<evidence type="ECO:0000305" key="7"/>
<evidence type="ECO:0000305" key="8">
    <source>
    </source>
</evidence>